<comment type="function">
    <text evidence="2">Involved in mRNA degradation. Hydrolyzes single-stranded polyribonucleotides processively in the 3' to 5' direction.</text>
</comment>
<comment type="catalytic activity">
    <reaction evidence="2">
        <text>Exonucleolytic cleavage in the 3'- to 5'-direction to yield nucleoside 5'-phosphates.</text>
        <dbReference type="EC" id="3.1.13.1"/>
    </reaction>
</comment>
<comment type="subcellular location">
    <subcellularLocation>
        <location evidence="2">Cytoplasm</location>
    </subcellularLocation>
</comment>
<comment type="similarity">
    <text evidence="2">Belongs to the RNR ribonuclease family. RNase II subfamily.</text>
</comment>
<evidence type="ECO:0000255" key="1"/>
<evidence type="ECO:0000255" key="2">
    <source>
        <dbReference type="HAMAP-Rule" id="MF_01036"/>
    </source>
</evidence>
<dbReference type="EC" id="3.1.13.1" evidence="2"/>
<dbReference type="EMBL" id="BX936398">
    <property type="protein sequence ID" value="CAH21395.1"/>
    <property type="molecule type" value="Genomic_DNA"/>
</dbReference>
<dbReference type="RefSeq" id="WP_011192452.1">
    <property type="nucleotide sequence ID" value="NC_006155.1"/>
</dbReference>
<dbReference type="SMR" id="Q66AH3"/>
<dbReference type="GeneID" id="49785847"/>
<dbReference type="KEGG" id="ypo:BZ17_306"/>
<dbReference type="KEGG" id="yps:YPTB2157"/>
<dbReference type="PATRIC" id="fig|273123.14.peg.324"/>
<dbReference type="Proteomes" id="UP000001011">
    <property type="component" value="Chromosome"/>
</dbReference>
<dbReference type="GO" id="GO:0005829">
    <property type="term" value="C:cytosol"/>
    <property type="evidence" value="ECO:0007669"/>
    <property type="project" value="UniProtKB-ARBA"/>
</dbReference>
<dbReference type="GO" id="GO:0008859">
    <property type="term" value="F:exoribonuclease II activity"/>
    <property type="evidence" value="ECO:0007669"/>
    <property type="project" value="UniProtKB-UniRule"/>
</dbReference>
<dbReference type="GO" id="GO:0003723">
    <property type="term" value="F:RNA binding"/>
    <property type="evidence" value="ECO:0007669"/>
    <property type="project" value="UniProtKB-KW"/>
</dbReference>
<dbReference type="GO" id="GO:0006402">
    <property type="term" value="P:mRNA catabolic process"/>
    <property type="evidence" value="ECO:0007669"/>
    <property type="project" value="UniProtKB-UniRule"/>
</dbReference>
<dbReference type="FunFam" id="2.40.50.140:FF:000079">
    <property type="entry name" value="Exoribonuclease 2"/>
    <property type="match status" value="1"/>
</dbReference>
<dbReference type="Gene3D" id="2.40.50.640">
    <property type="match status" value="1"/>
</dbReference>
<dbReference type="Gene3D" id="2.40.50.140">
    <property type="entry name" value="Nucleic acid-binding proteins"/>
    <property type="match status" value="2"/>
</dbReference>
<dbReference type="HAMAP" id="MF_01036">
    <property type="entry name" value="RNase_II"/>
    <property type="match status" value="1"/>
</dbReference>
<dbReference type="InterPro" id="IPR011129">
    <property type="entry name" value="CSD"/>
</dbReference>
<dbReference type="InterPro" id="IPR012340">
    <property type="entry name" value="NA-bd_OB-fold"/>
</dbReference>
<dbReference type="InterPro" id="IPR013223">
    <property type="entry name" value="RNase_B_OB_dom"/>
</dbReference>
<dbReference type="InterPro" id="IPR011804">
    <property type="entry name" value="RNase_II"/>
</dbReference>
<dbReference type="InterPro" id="IPR001900">
    <property type="entry name" value="RNase_II/R"/>
</dbReference>
<dbReference type="InterPro" id="IPR022966">
    <property type="entry name" value="RNase_II/R_CS"/>
</dbReference>
<dbReference type="InterPro" id="IPR004476">
    <property type="entry name" value="RNase_II/RNase_R"/>
</dbReference>
<dbReference type="InterPro" id="IPR050180">
    <property type="entry name" value="RNR_Ribonuclease"/>
</dbReference>
<dbReference type="InterPro" id="IPR003029">
    <property type="entry name" value="S1_domain"/>
</dbReference>
<dbReference type="NCBIfam" id="TIGR00358">
    <property type="entry name" value="3_prime_RNase"/>
    <property type="match status" value="1"/>
</dbReference>
<dbReference type="NCBIfam" id="NF003455">
    <property type="entry name" value="PRK05054.1"/>
    <property type="match status" value="1"/>
</dbReference>
<dbReference type="NCBIfam" id="TIGR02062">
    <property type="entry name" value="RNase_B"/>
    <property type="match status" value="1"/>
</dbReference>
<dbReference type="PANTHER" id="PTHR23355:SF37">
    <property type="entry name" value="EXORIBONUCLEASE 2"/>
    <property type="match status" value="1"/>
</dbReference>
<dbReference type="PANTHER" id="PTHR23355">
    <property type="entry name" value="RIBONUCLEASE"/>
    <property type="match status" value="1"/>
</dbReference>
<dbReference type="Pfam" id="PF08206">
    <property type="entry name" value="OB_RNB"/>
    <property type="match status" value="1"/>
</dbReference>
<dbReference type="Pfam" id="PF00773">
    <property type="entry name" value="RNB"/>
    <property type="match status" value="1"/>
</dbReference>
<dbReference type="Pfam" id="PF00575">
    <property type="entry name" value="S1"/>
    <property type="match status" value="1"/>
</dbReference>
<dbReference type="SMART" id="SM00357">
    <property type="entry name" value="CSP"/>
    <property type="match status" value="1"/>
</dbReference>
<dbReference type="SMART" id="SM00955">
    <property type="entry name" value="RNB"/>
    <property type="match status" value="1"/>
</dbReference>
<dbReference type="SUPFAM" id="SSF50249">
    <property type="entry name" value="Nucleic acid-binding proteins"/>
    <property type="match status" value="4"/>
</dbReference>
<dbReference type="PROSITE" id="PS01175">
    <property type="entry name" value="RIBONUCLEASE_II"/>
    <property type="match status" value="1"/>
</dbReference>
<feature type="chain" id="PRO_1000063908" description="Exoribonuclease 2">
    <location>
        <begin position="1"/>
        <end position="644"/>
    </location>
</feature>
<feature type="domain" description="RNB" evidence="1">
    <location>
        <begin position="189"/>
        <end position="516"/>
    </location>
</feature>
<feature type="domain" description="S1 motif" evidence="2">
    <location>
        <begin position="561"/>
        <end position="643"/>
    </location>
</feature>
<sequence>MFQDNPLLAQLKQQLHTQTPRVEGVVKGTEKGFGFLEVDGQKSYFIPPPQMKKVMHGDRIIATLHTDKDREIAEPETLVEPFLSRFVGRVQRKDDRLSIVPDHPLLRDAIQCRPVRELTHSFQNGDWVVAEMCRHPLKGDRAFQADLTAFITNGEDHFVPWWVTLARHNLEREAPAMVESALNDAELEREDLTALNFVTIDSASTEDMDDALFVQDNGDGSWLLTIAIADPTAYVVENSELDLTARKRAFTNYLPGFNIPMLPRDLSDNLCSLRPNERRPVLVCRVTITEEGTLSNDIRFSAAWVESKAKLVYDDVSDWLEGNNRWQPQDTAIAEQITLLKRICDARSNWRQQHALVFKDRPDYRFLLGEKGEVLDIIVEHRRIANRIVEECMIAANVCAALALREHLGFGIYNVHTGFDPALVEQAASVLKANGVDADPQALLTLPGFCELRRHLDALPTQFLDSRIRRFQTFAEISTVPGPHFGLGLEAYATWTSPIRKYGDMVNHRLLKAMITGQQAEKPQEEITVQLAERRRLNRMAERDVGDWLYARYLQPQAGTDTRFTAEIIDITRGGLRVRLLDNGAVAFIPAPFIHAVRDEVVCSQETGTVQIKGETVYSQSDKIEVRIAEVRMETRNVIARPVA</sequence>
<protein>
    <recommendedName>
        <fullName evidence="2">Exoribonuclease 2</fullName>
        <ecNumber evidence="2">3.1.13.1</ecNumber>
    </recommendedName>
    <alternativeName>
        <fullName evidence="2">Exoribonuclease II</fullName>
        <shortName evidence="2">RNase II</shortName>
        <shortName evidence="2">Ribonuclease II</shortName>
    </alternativeName>
</protein>
<accession>Q66AH3</accession>
<reference key="1">
    <citation type="journal article" date="2004" name="Proc. Natl. Acad. Sci. U.S.A.">
        <title>Insights into the evolution of Yersinia pestis through whole-genome comparison with Yersinia pseudotuberculosis.</title>
        <authorList>
            <person name="Chain P.S.G."/>
            <person name="Carniel E."/>
            <person name="Larimer F.W."/>
            <person name="Lamerdin J."/>
            <person name="Stoutland P.O."/>
            <person name="Regala W.M."/>
            <person name="Georgescu A.M."/>
            <person name="Vergez L.M."/>
            <person name="Land M.L."/>
            <person name="Motin V.L."/>
            <person name="Brubaker R.R."/>
            <person name="Fowler J."/>
            <person name="Hinnebusch J."/>
            <person name="Marceau M."/>
            <person name="Medigue C."/>
            <person name="Simonet M."/>
            <person name="Chenal-Francisque V."/>
            <person name="Souza B."/>
            <person name="Dacheux D."/>
            <person name="Elliott J.M."/>
            <person name="Derbise A."/>
            <person name="Hauser L.J."/>
            <person name="Garcia E."/>
        </authorList>
    </citation>
    <scope>NUCLEOTIDE SEQUENCE [LARGE SCALE GENOMIC DNA]</scope>
    <source>
        <strain>IP32953</strain>
    </source>
</reference>
<gene>
    <name evidence="2" type="primary">rnb</name>
    <name type="ordered locus">YPTB2157</name>
</gene>
<keyword id="KW-0963">Cytoplasm</keyword>
<keyword id="KW-0269">Exonuclease</keyword>
<keyword id="KW-0378">Hydrolase</keyword>
<keyword id="KW-0540">Nuclease</keyword>
<keyword id="KW-0694">RNA-binding</keyword>
<organism>
    <name type="scientific">Yersinia pseudotuberculosis serotype I (strain IP32953)</name>
    <dbReference type="NCBI Taxonomy" id="273123"/>
    <lineage>
        <taxon>Bacteria</taxon>
        <taxon>Pseudomonadati</taxon>
        <taxon>Pseudomonadota</taxon>
        <taxon>Gammaproteobacteria</taxon>
        <taxon>Enterobacterales</taxon>
        <taxon>Yersiniaceae</taxon>
        <taxon>Yersinia</taxon>
    </lineage>
</organism>
<proteinExistence type="inferred from homology"/>
<name>RNB_YERPS</name>